<accession>Q111C2</accession>
<comment type="function">
    <text evidence="1">Catalyzes the conversion of (8S)-3',8-cyclo-7,8-dihydroguanosine 5'-triphosphate to cyclic pyranopterin monophosphate (cPMP).</text>
</comment>
<comment type="catalytic activity">
    <reaction evidence="1">
        <text>(8S)-3',8-cyclo-7,8-dihydroguanosine 5'-triphosphate = cyclic pyranopterin phosphate + diphosphate</text>
        <dbReference type="Rhea" id="RHEA:49580"/>
        <dbReference type="ChEBI" id="CHEBI:33019"/>
        <dbReference type="ChEBI" id="CHEBI:59648"/>
        <dbReference type="ChEBI" id="CHEBI:131766"/>
        <dbReference type="EC" id="4.6.1.17"/>
    </reaction>
</comment>
<comment type="pathway">
    <text evidence="1">Cofactor biosynthesis; molybdopterin biosynthesis.</text>
</comment>
<comment type="subunit">
    <text evidence="1">Homohexamer; trimer of dimers.</text>
</comment>
<comment type="similarity">
    <text evidence="1">Belongs to the MoaC family.</text>
</comment>
<organism>
    <name type="scientific">Trichodesmium erythraeum (strain IMS101)</name>
    <dbReference type="NCBI Taxonomy" id="203124"/>
    <lineage>
        <taxon>Bacteria</taxon>
        <taxon>Bacillati</taxon>
        <taxon>Cyanobacteriota</taxon>
        <taxon>Cyanophyceae</taxon>
        <taxon>Oscillatoriophycideae</taxon>
        <taxon>Oscillatoriales</taxon>
        <taxon>Microcoleaceae</taxon>
        <taxon>Trichodesmium</taxon>
    </lineage>
</organism>
<evidence type="ECO:0000255" key="1">
    <source>
        <dbReference type="HAMAP-Rule" id="MF_01224"/>
    </source>
</evidence>
<gene>
    <name evidence="1" type="primary">moaC</name>
    <name type="ordered locus">Tery_2714</name>
</gene>
<sequence length="166" mass="18006">MTRDFSKFEQNLTHLDSEGAVKMVDVSTKVQTIRQAEAAGQVRMLPETFEAIQRGNSPKGDVLGTAKLAGIMAAKQTAQLIPLCHPLPLQKIDIELIPDPHLPGYQIRAMVKTKAETGVEMEALTAVSVAALTLYDMAKALEKSISIELIRLLSKSGGKSGDYMVK</sequence>
<dbReference type="EC" id="4.6.1.17" evidence="1"/>
<dbReference type="EMBL" id="CP000393">
    <property type="protein sequence ID" value="ABG51902.1"/>
    <property type="molecule type" value="Genomic_DNA"/>
</dbReference>
<dbReference type="RefSeq" id="WP_011612264.1">
    <property type="nucleotide sequence ID" value="NC_008312.1"/>
</dbReference>
<dbReference type="SMR" id="Q111C2"/>
<dbReference type="STRING" id="203124.Tery_2714"/>
<dbReference type="KEGG" id="ter:Tery_2714"/>
<dbReference type="eggNOG" id="COG0315">
    <property type="taxonomic scope" value="Bacteria"/>
</dbReference>
<dbReference type="HOGENOM" id="CLU_074693_1_1_3"/>
<dbReference type="OrthoDB" id="9794429at2"/>
<dbReference type="UniPathway" id="UPA00344"/>
<dbReference type="GO" id="GO:0061799">
    <property type="term" value="F:cyclic pyranopterin monophosphate synthase activity"/>
    <property type="evidence" value="ECO:0007669"/>
    <property type="project" value="UniProtKB-UniRule"/>
</dbReference>
<dbReference type="GO" id="GO:0006777">
    <property type="term" value="P:Mo-molybdopterin cofactor biosynthetic process"/>
    <property type="evidence" value="ECO:0007669"/>
    <property type="project" value="UniProtKB-UniRule"/>
</dbReference>
<dbReference type="CDD" id="cd01420">
    <property type="entry name" value="MoaC_PE"/>
    <property type="match status" value="1"/>
</dbReference>
<dbReference type="Gene3D" id="3.30.70.640">
    <property type="entry name" value="Molybdopterin cofactor biosynthesis C (MoaC) domain"/>
    <property type="match status" value="1"/>
</dbReference>
<dbReference type="HAMAP" id="MF_01224_B">
    <property type="entry name" value="MoaC_B"/>
    <property type="match status" value="1"/>
</dbReference>
<dbReference type="InterPro" id="IPR023045">
    <property type="entry name" value="MoaC"/>
</dbReference>
<dbReference type="InterPro" id="IPR047594">
    <property type="entry name" value="MoaC_bact/euk"/>
</dbReference>
<dbReference type="InterPro" id="IPR036522">
    <property type="entry name" value="MoaC_sf"/>
</dbReference>
<dbReference type="InterPro" id="IPR050105">
    <property type="entry name" value="MoCo_biosynth_MoaA/MoaC"/>
</dbReference>
<dbReference type="InterPro" id="IPR002820">
    <property type="entry name" value="Mopterin_CF_biosynth-C_dom"/>
</dbReference>
<dbReference type="NCBIfam" id="TIGR00581">
    <property type="entry name" value="moaC"/>
    <property type="match status" value="1"/>
</dbReference>
<dbReference type="NCBIfam" id="NF006870">
    <property type="entry name" value="PRK09364.1"/>
    <property type="match status" value="1"/>
</dbReference>
<dbReference type="PANTHER" id="PTHR22960">
    <property type="entry name" value="MOLYBDOPTERIN COFACTOR SYNTHESIS PROTEIN A"/>
    <property type="match status" value="1"/>
</dbReference>
<dbReference type="Pfam" id="PF01967">
    <property type="entry name" value="MoaC"/>
    <property type="match status" value="1"/>
</dbReference>
<dbReference type="SUPFAM" id="SSF55040">
    <property type="entry name" value="Molybdenum cofactor biosynthesis protein C, MoaC"/>
    <property type="match status" value="1"/>
</dbReference>
<protein>
    <recommendedName>
        <fullName evidence="1">Cyclic pyranopterin monophosphate synthase</fullName>
        <ecNumber evidence="1">4.6.1.17</ecNumber>
    </recommendedName>
    <alternativeName>
        <fullName evidence="1">Molybdenum cofactor biosynthesis protein C</fullName>
    </alternativeName>
</protein>
<reference key="1">
    <citation type="journal article" date="2015" name="Proc. Natl. Acad. Sci. U.S.A.">
        <title>Trichodesmium genome maintains abundant, widespread noncoding DNA in situ, despite oligotrophic lifestyle.</title>
        <authorList>
            <person name="Walworth N."/>
            <person name="Pfreundt U."/>
            <person name="Nelson W.C."/>
            <person name="Mincer T."/>
            <person name="Heidelberg J.F."/>
            <person name="Fu F."/>
            <person name="Waterbury J.B."/>
            <person name="Glavina del Rio T."/>
            <person name="Goodwin L."/>
            <person name="Kyrpides N.C."/>
            <person name="Land M.L."/>
            <person name="Woyke T."/>
            <person name="Hutchins D.A."/>
            <person name="Hess W.R."/>
            <person name="Webb E.A."/>
        </authorList>
    </citation>
    <scope>NUCLEOTIDE SEQUENCE [LARGE SCALE GENOMIC DNA]</scope>
    <source>
        <strain>IMS101</strain>
    </source>
</reference>
<name>MOAC_TRIEI</name>
<feature type="chain" id="PRO_1000054158" description="Cyclic pyranopterin monophosphate synthase">
    <location>
        <begin position="1"/>
        <end position="166"/>
    </location>
</feature>
<feature type="active site" evidence="1">
    <location>
        <position position="136"/>
    </location>
</feature>
<feature type="binding site" evidence="1">
    <location>
        <begin position="83"/>
        <end position="85"/>
    </location>
    <ligand>
        <name>substrate</name>
    </ligand>
</feature>
<feature type="binding site" evidence="1">
    <location>
        <begin position="121"/>
        <end position="122"/>
    </location>
    <ligand>
        <name>substrate</name>
    </ligand>
</feature>
<proteinExistence type="inferred from homology"/>
<keyword id="KW-0456">Lyase</keyword>
<keyword id="KW-0501">Molybdenum cofactor biosynthesis</keyword>